<comment type="function">
    <text>This is a receptor for the anterior pituitary hormone prolactin.</text>
</comment>
<comment type="subunit">
    <text evidence="1">Interacts with SMARCA1. Interacts with NEK3 and VAV2 and this interaction is prolactin-dependent.</text>
</comment>
<comment type="subcellular location">
    <subcellularLocation>
        <location>Membrane</location>
        <topology>Single-pass type I membrane protein</topology>
    </subcellularLocation>
</comment>
<comment type="domain">
    <text>The WSXWS motif appears to be necessary for proper protein folding and thereby efficient intracellular transport and cell-surface receptor binding.</text>
</comment>
<comment type="domain">
    <text>The box 1 motif is required for JAK interaction and/or activation.</text>
</comment>
<comment type="similarity">
    <text evidence="5">Belongs to the type I cytokine receptor family. Type 1 subfamily.</text>
</comment>
<protein>
    <recommendedName>
        <fullName>Prolactin receptor</fullName>
        <shortName>PRL-R</shortName>
    </recommendedName>
</protein>
<dbReference type="EMBL" id="X94953">
    <property type="protein sequence ID" value="CAA64419.1"/>
    <property type="molecule type" value="mRNA"/>
</dbReference>
<dbReference type="SMR" id="Q28235"/>
<dbReference type="GlyCosmos" id="Q28235">
    <property type="glycosylation" value="3 sites, No reported glycans"/>
</dbReference>
<dbReference type="GO" id="GO:0009897">
    <property type="term" value="C:external side of plasma membrane"/>
    <property type="evidence" value="ECO:0007669"/>
    <property type="project" value="TreeGrafter"/>
</dbReference>
<dbReference type="GO" id="GO:0043235">
    <property type="term" value="C:receptor complex"/>
    <property type="evidence" value="ECO:0007669"/>
    <property type="project" value="TreeGrafter"/>
</dbReference>
<dbReference type="GO" id="GO:0019955">
    <property type="term" value="F:cytokine binding"/>
    <property type="evidence" value="ECO:0007669"/>
    <property type="project" value="TreeGrafter"/>
</dbReference>
<dbReference type="GO" id="GO:0046872">
    <property type="term" value="F:metal ion binding"/>
    <property type="evidence" value="ECO:0007669"/>
    <property type="project" value="UniProtKB-KW"/>
</dbReference>
<dbReference type="GO" id="GO:0017046">
    <property type="term" value="F:peptide hormone binding"/>
    <property type="evidence" value="ECO:0007669"/>
    <property type="project" value="TreeGrafter"/>
</dbReference>
<dbReference type="GO" id="GO:0004925">
    <property type="term" value="F:prolactin receptor activity"/>
    <property type="evidence" value="ECO:0007669"/>
    <property type="project" value="TreeGrafter"/>
</dbReference>
<dbReference type="GO" id="GO:0008284">
    <property type="term" value="P:positive regulation of cell population proliferation"/>
    <property type="evidence" value="ECO:0007669"/>
    <property type="project" value="TreeGrafter"/>
</dbReference>
<dbReference type="CDD" id="cd00063">
    <property type="entry name" value="FN3"/>
    <property type="match status" value="2"/>
</dbReference>
<dbReference type="FunFam" id="2.60.40.10:FF:000287">
    <property type="entry name" value="Prolactin receptor"/>
    <property type="match status" value="1"/>
</dbReference>
<dbReference type="FunFam" id="2.60.40.10:FF:000358">
    <property type="entry name" value="Prolactin receptor"/>
    <property type="match status" value="1"/>
</dbReference>
<dbReference type="Gene3D" id="2.60.40.10">
    <property type="entry name" value="Immunoglobulins"/>
    <property type="match status" value="2"/>
</dbReference>
<dbReference type="InterPro" id="IPR003961">
    <property type="entry name" value="FN3_dom"/>
</dbReference>
<dbReference type="InterPro" id="IPR036116">
    <property type="entry name" value="FN3_sf"/>
</dbReference>
<dbReference type="InterPro" id="IPR015152">
    <property type="entry name" value="Growth/epo_recpt_lig-bind"/>
</dbReference>
<dbReference type="InterPro" id="IPR013783">
    <property type="entry name" value="Ig-like_fold"/>
</dbReference>
<dbReference type="InterPro" id="IPR003528">
    <property type="entry name" value="Long_hematopoietin_rcpt_CS"/>
</dbReference>
<dbReference type="InterPro" id="IPR050379">
    <property type="entry name" value="Type-I_Cytokine_Rcpt"/>
</dbReference>
<dbReference type="PANTHER" id="PTHR23036">
    <property type="entry name" value="CYTOKINE RECEPTOR"/>
    <property type="match status" value="1"/>
</dbReference>
<dbReference type="PANTHER" id="PTHR23036:SF86">
    <property type="entry name" value="PROLACTIN RECEPTOR"/>
    <property type="match status" value="1"/>
</dbReference>
<dbReference type="Pfam" id="PF09067">
    <property type="entry name" value="EpoR_lig-bind"/>
    <property type="match status" value="1"/>
</dbReference>
<dbReference type="SMART" id="SM00060">
    <property type="entry name" value="FN3"/>
    <property type="match status" value="2"/>
</dbReference>
<dbReference type="SUPFAM" id="SSF49265">
    <property type="entry name" value="Fibronectin type III"/>
    <property type="match status" value="2"/>
</dbReference>
<dbReference type="PROSITE" id="PS50853">
    <property type="entry name" value="FN3"/>
    <property type="match status" value="2"/>
</dbReference>
<dbReference type="PROSITE" id="PS01352">
    <property type="entry name" value="HEMATOPO_REC_L_F1"/>
    <property type="match status" value="1"/>
</dbReference>
<reference key="1">
    <citation type="journal article" date="1995" name="J. Endocrinol.">
        <title>Expression of the prolactin receptor gene during the breeding and non-breeding seasons in red deer (Cervus elaphus): evidence for the expression of two forms in the testis.</title>
        <authorList>
            <person name="Clarke L.A."/>
            <person name="Edery M."/>
            <person name="Loudon A.S."/>
            <person name="Randall V.A."/>
            <person name="Postel-Vinay M.-C."/>
            <person name="Kelly P.A."/>
            <person name="Jabbour H.N."/>
        </authorList>
    </citation>
    <scope>NUCLEOTIDE SEQUENCE [MRNA]</scope>
    <source>
        <tissue>Liver</tissue>
    </source>
</reference>
<keyword id="KW-1015">Disulfide bond</keyword>
<keyword id="KW-0325">Glycoprotein</keyword>
<keyword id="KW-0472">Membrane</keyword>
<keyword id="KW-0479">Metal-binding</keyword>
<keyword id="KW-0675">Receptor</keyword>
<keyword id="KW-0677">Repeat</keyword>
<keyword id="KW-0732">Signal</keyword>
<keyword id="KW-0812">Transmembrane</keyword>
<keyword id="KW-1133">Transmembrane helix</keyword>
<keyword id="KW-0862">Zinc</keyword>
<sequence length="581" mass="65159">MKENVASRAVFILLLFLNASLLNGQSPPGKPKIIKCRSPGKETFTCWWEPGSDGGLPTNYTLTYHKEGETLIHECPDYKTGGPNTCYFSKKHTSIWKIYVITVNAINQMGVSSSDPLYVDVTYIVEPEPPANLTLELKHPEDRKPYLWIKWFPPTLTDVKSGWFMIQYEIRLKPETAADWEIHFAAKQTQLKIFSLYPGQKYLVQVRCKPDHGYWSEWSPESSIQIPNDFPVNDTTVWIFVAVLSAVICLIMVWAVALKGYSMMTCILPPVPGPKIKGFDIHLLEKGKSEELLRALESQDFPPTSDCEDLLMEFIEVDDSEDQQLMPRPSKEHMEQGVKPMHMDPDSDSGRGSCDSPSLFSEKCDEPQAHPFKFYTPEDPEKLENPETNLTCLQAPQSTSREDKIPYFHANGPKSSTWPFPQPPSLHNPRYSYHNIADVCELALGMAGTTATLLDQTDQHALKPSKTIETGGEGKAAKQRESEGCSSKPDQDTGWPLPQDKTPLISAKPLEYVEIHKVSQDGVLALFPKQNEKVGAPETSKEYSKVSRVTDSNILVLVPDTQVQNLTLLEEPAKEAPPALP</sequence>
<gene>
    <name type="primary">PRLR</name>
</gene>
<organism>
    <name type="scientific">Cervus elaphus</name>
    <name type="common">Red deer</name>
    <dbReference type="NCBI Taxonomy" id="9860"/>
    <lineage>
        <taxon>Eukaryota</taxon>
        <taxon>Metazoa</taxon>
        <taxon>Chordata</taxon>
        <taxon>Craniata</taxon>
        <taxon>Vertebrata</taxon>
        <taxon>Euteleostomi</taxon>
        <taxon>Mammalia</taxon>
        <taxon>Eutheria</taxon>
        <taxon>Laurasiatheria</taxon>
        <taxon>Artiodactyla</taxon>
        <taxon>Ruminantia</taxon>
        <taxon>Pecora</taxon>
        <taxon>Cervidae</taxon>
        <taxon>Cervinae</taxon>
        <taxon>Cervus</taxon>
    </lineage>
</organism>
<feature type="signal peptide" evidence="1">
    <location>
        <begin position="1"/>
        <end position="24"/>
    </location>
</feature>
<feature type="chain" id="PRO_0000010976" description="Prolactin receptor">
    <location>
        <begin position="25"/>
        <end position="581"/>
    </location>
</feature>
<feature type="topological domain" description="Extracellular" evidence="2">
    <location>
        <begin position="25"/>
        <end position="234"/>
    </location>
</feature>
<feature type="transmembrane region" description="Helical" evidence="2">
    <location>
        <begin position="235"/>
        <end position="258"/>
    </location>
</feature>
<feature type="topological domain" description="Cytoplasmic" evidence="2">
    <location>
        <begin position="259"/>
        <end position="581"/>
    </location>
</feature>
<feature type="domain" description="Fibronectin type-III 1" evidence="3">
    <location>
        <begin position="27"/>
        <end position="127"/>
    </location>
</feature>
<feature type="domain" description="Fibronectin type-III 2" evidence="3">
    <location>
        <begin position="129"/>
        <end position="229"/>
    </location>
</feature>
<feature type="region of interest" description="Disordered" evidence="4">
    <location>
        <begin position="321"/>
        <end position="362"/>
    </location>
</feature>
<feature type="region of interest" description="Disordered" evidence="4">
    <location>
        <begin position="462"/>
        <end position="502"/>
    </location>
</feature>
<feature type="short sequence motif" description="WSXWS motif">
    <location>
        <begin position="215"/>
        <end position="219"/>
    </location>
</feature>
<feature type="short sequence motif" description="Box 1 motif">
    <location>
        <begin position="267"/>
        <end position="275"/>
    </location>
</feature>
<feature type="compositionally biased region" description="Basic and acidic residues" evidence="4">
    <location>
        <begin position="329"/>
        <end position="349"/>
    </location>
</feature>
<feature type="binding site" evidence="1">
    <location>
        <position position="211"/>
    </location>
    <ligand>
        <name>Zn(2+)</name>
        <dbReference type="ChEBI" id="CHEBI:29105"/>
    </ligand>
</feature>
<feature type="binding site" evidence="1">
    <location>
        <position position="212"/>
    </location>
    <ligand>
        <name>Zn(2+)</name>
        <dbReference type="ChEBI" id="CHEBI:29105"/>
    </ligand>
</feature>
<feature type="glycosylation site" description="N-linked (GlcNAc...) asparagine" evidence="2">
    <location>
        <position position="59"/>
    </location>
</feature>
<feature type="glycosylation site" description="N-linked (GlcNAc...) asparagine" evidence="2">
    <location>
        <position position="132"/>
    </location>
</feature>
<feature type="glycosylation site" description="N-linked (GlcNAc...) asparagine" evidence="2">
    <location>
        <position position="233"/>
    </location>
</feature>
<feature type="disulfide bond" evidence="1">
    <location>
        <begin position="36"/>
        <end position="46"/>
    </location>
</feature>
<feature type="disulfide bond" evidence="1">
    <location>
        <begin position="75"/>
        <end position="86"/>
    </location>
</feature>
<evidence type="ECO:0000250" key="1"/>
<evidence type="ECO:0000255" key="2"/>
<evidence type="ECO:0000255" key="3">
    <source>
        <dbReference type="PROSITE-ProRule" id="PRU00316"/>
    </source>
</evidence>
<evidence type="ECO:0000256" key="4">
    <source>
        <dbReference type="SAM" id="MobiDB-lite"/>
    </source>
</evidence>
<evidence type="ECO:0000305" key="5"/>
<accession>Q28235</accession>
<name>PRLR_CEREL</name>
<proteinExistence type="evidence at transcript level"/>